<reference key="1">
    <citation type="journal article" date="1998" name="Nature">
        <title>Deciphering the biology of Mycobacterium tuberculosis from the complete genome sequence.</title>
        <authorList>
            <person name="Cole S.T."/>
            <person name="Brosch R."/>
            <person name="Parkhill J."/>
            <person name="Garnier T."/>
            <person name="Churcher C.M."/>
            <person name="Harris D.E."/>
            <person name="Gordon S.V."/>
            <person name="Eiglmeier K."/>
            <person name="Gas S."/>
            <person name="Barry C.E. III"/>
            <person name="Tekaia F."/>
            <person name="Badcock K."/>
            <person name="Basham D."/>
            <person name="Brown D."/>
            <person name="Chillingworth T."/>
            <person name="Connor R."/>
            <person name="Davies R.M."/>
            <person name="Devlin K."/>
            <person name="Feltwell T."/>
            <person name="Gentles S."/>
            <person name="Hamlin N."/>
            <person name="Holroyd S."/>
            <person name="Hornsby T."/>
            <person name="Jagels K."/>
            <person name="Krogh A."/>
            <person name="McLean J."/>
            <person name="Moule S."/>
            <person name="Murphy L.D."/>
            <person name="Oliver S."/>
            <person name="Osborne J."/>
            <person name="Quail M.A."/>
            <person name="Rajandream M.A."/>
            <person name="Rogers J."/>
            <person name="Rutter S."/>
            <person name="Seeger K."/>
            <person name="Skelton S."/>
            <person name="Squares S."/>
            <person name="Squares R."/>
            <person name="Sulston J.E."/>
            <person name="Taylor K."/>
            <person name="Whitehead S."/>
            <person name="Barrell B.G."/>
        </authorList>
    </citation>
    <scope>NUCLEOTIDE SEQUENCE [LARGE SCALE GENOMIC DNA]</scope>
    <source>
        <strain>ATCC 25618 / H37Rv</strain>
    </source>
</reference>
<reference key="2">
    <citation type="journal article" date="2005" name="Nucleic Acids Res.">
        <title>Toxin-antitoxin loci are highly abundant in free-living but lost from host-associated prokaryotes.</title>
        <authorList>
            <person name="Pandey D.P."/>
            <person name="Gerdes K."/>
        </authorList>
    </citation>
    <scope>IDENTIFICATION</scope>
    <scope>POSSIBLE FUNCTION</scope>
    <source>
        <strain>ATCC 25618 / H37Rv</strain>
    </source>
</reference>
<reference key="3">
    <citation type="journal article" date="2006" name="J. Biol. Chem.">
        <title>Characterization of mRNA interferases from Mycobacterium tuberculosis.</title>
        <authorList>
            <person name="Zhu L."/>
            <person name="Zhang Y."/>
            <person name="Teh J.S."/>
            <person name="Zhang J."/>
            <person name="Connell N."/>
            <person name="Rubin H."/>
            <person name="Inouye M."/>
        </authorList>
    </citation>
    <scope>GENE NAME</scope>
    <scope>POSSIBLE FUNCTION</scope>
    <source>
        <strain>ATCC 25618 / H37Rv</strain>
    </source>
</reference>
<reference key="4">
    <citation type="journal article" date="2009" name="Microbiology">
        <title>Mce3R, a TetR-type transcriptional repressor, controls the expression of a regulon involved in lipid metabolism in Mycobacterium tuberculosis.</title>
        <authorList>
            <person name="de la Paz Santangelo M."/>
            <person name="Klepp L."/>
            <person name="Nunez-Garcia J."/>
            <person name="Blanco F.C."/>
            <person name="Soria M."/>
            <person name="Garcia-Pelayo M.C."/>
            <person name="Bianco M.V."/>
            <person name="Cataldi A.A."/>
            <person name="Golby P."/>
            <person name="Jackson M."/>
            <person name="Gordon S.V."/>
            <person name="Bigi F."/>
        </authorList>
    </citation>
    <scope>INDUCTION</scope>
</reference>
<reference key="5">
    <citation type="journal article" date="2009" name="PLoS Genet.">
        <title>Comprehensive functional analysis of Mycobacterium tuberculosis toxin-antitoxin systems: implications for pathogenesis, stress responses, and evolution.</title>
        <authorList>
            <person name="Ramage H.R."/>
            <person name="Connolly L.E."/>
            <person name="Cox J.S."/>
        </authorList>
    </citation>
    <scope>EXPRESSION IN M.SMEGMATIS</scope>
    <scope>FUNCTION AS AN ANTITOXIN</scope>
    <source>
        <strain>ATCC 35801 / TMC 107 / Erdman</strain>
    </source>
</reference>
<name>MAZE5_MYCTU</name>
<proteinExistence type="evidence at protein level"/>
<sequence length="125" mass="13592">MKTARLQVTLRCAVDLINSSSDQCFARIEHVASDQADPRPGVWHSSGMNRIRLSTTVDAALLTSARDMRAGITDAALIDEALAALLARHRSAEVDASYAAYDKHPVDEPDEWGDLASWRRAAGDS</sequence>
<comment type="function">
    <text evidence="3">Antitoxin component of a type II toxin-antitoxin (TA) system. Upon expression in M.smegmatis neutralizes the effect of cognate toxin MazF5.</text>
</comment>
<comment type="subunit">
    <text evidence="1">Forms a complex with cognate toxin MazF5.</text>
</comment>
<comment type="induction">
    <text evidence="2">Repressed by Mce3R.</text>
</comment>
<dbReference type="EMBL" id="AL123456">
    <property type="protein sequence ID" value="CCP44710.1"/>
    <property type="molecule type" value="Genomic_DNA"/>
</dbReference>
<dbReference type="PIR" id="C70637">
    <property type="entry name" value="C70637"/>
</dbReference>
<dbReference type="RefSeq" id="NP_216459.1">
    <property type="nucleotide sequence ID" value="NC_000962.3"/>
</dbReference>
<dbReference type="RefSeq" id="WP_003409780.1">
    <property type="nucleotide sequence ID" value="NZ_NVQJ01000034.1"/>
</dbReference>
<dbReference type="SMR" id="P9WJ89"/>
<dbReference type="STRING" id="83332.Rv1943c"/>
<dbReference type="PaxDb" id="83332-Rv1943c"/>
<dbReference type="DNASU" id="885605"/>
<dbReference type="GeneID" id="45427974"/>
<dbReference type="GeneID" id="885605"/>
<dbReference type="KEGG" id="mtu:Rv1943c"/>
<dbReference type="KEGG" id="mtv:RVBD_1943c"/>
<dbReference type="PATRIC" id="fig|83332.111.peg.2161"/>
<dbReference type="TubercuList" id="Rv1943c"/>
<dbReference type="eggNOG" id="ENOG50345T0">
    <property type="taxonomic scope" value="Bacteria"/>
</dbReference>
<dbReference type="InParanoid" id="P9WJ89"/>
<dbReference type="OrthoDB" id="4951104at2"/>
<dbReference type="Proteomes" id="UP000001584">
    <property type="component" value="Chromosome"/>
</dbReference>
<dbReference type="GO" id="GO:0045927">
    <property type="term" value="P:positive regulation of growth"/>
    <property type="evidence" value="ECO:0000315"/>
    <property type="project" value="MTBBASE"/>
</dbReference>
<feature type="chain" id="PRO_0000406299" description="Antitoxin MazE5">
    <location>
        <begin position="1"/>
        <end position="125"/>
    </location>
</feature>
<accession>P9WJ89</accession>
<accession>L0TAV7</accession>
<accession>P95271</accession>
<accession>Q7D7Q7</accession>
<organism>
    <name type="scientific">Mycobacterium tuberculosis (strain ATCC 25618 / H37Rv)</name>
    <dbReference type="NCBI Taxonomy" id="83332"/>
    <lineage>
        <taxon>Bacteria</taxon>
        <taxon>Bacillati</taxon>
        <taxon>Actinomycetota</taxon>
        <taxon>Actinomycetes</taxon>
        <taxon>Mycobacteriales</taxon>
        <taxon>Mycobacteriaceae</taxon>
        <taxon>Mycobacterium</taxon>
        <taxon>Mycobacterium tuberculosis complex</taxon>
    </lineage>
</organism>
<protein>
    <recommendedName>
        <fullName evidence="5">Antitoxin MazE5</fullName>
    </recommendedName>
</protein>
<evidence type="ECO:0000250" key="1">
    <source>
        <dbReference type="UniProtKB" id="O53451"/>
    </source>
</evidence>
<evidence type="ECO:0000269" key="2">
    <source>
    </source>
</evidence>
<evidence type="ECO:0000269" key="3">
    <source>
    </source>
</evidence>
<evidence type="ECO:0000303" key="4">
    <source>
    </source>
</evidence>
<evidence type="ECO:0000305" key="5"/>
<gene>
    <name type="primary">mazE5</name>
    <name evidence="4" type="synonym">mazE-mt5</name>
    <name type="ordered locus">Rv1943c</name>
</gene>
<keyword id="KW-1185">Reference proteome</keyword>
<keyword id="KW-1277">Toxin-antitoxin system</keyword>